<dbReference type="EC" id="7.1.1.9"/>
<dbReference type="EMBL" id="AY331080">
    <property type="protein sequence ID" value="AAR02581.1"/>
    <property type="molecule type" value="Genomic_DNA"/>
</dbReference>
<dbReference type="SMR" id="Q6EGI4"/>
<dbReference type="UniPathway" id="UPA00705"/>
<dbReference type="GO" id="GO:0005743">
    <property type="term" value="C:mitochondrial inner membrane"/>
    <property type="evidence" value="ECO:0007669"/>
    <property type="project" value="UniProtKB-SubCell"/>
</dbReference>
<dbReference type="GO" id="GO:0045277">
    <property type="term" value="C:respiratory chain complex IV"/>
    <property type="evidence" value="ECO:0000250"/>
    <property type="project" value="UniProtKB"/>
</dbReference>
<dbReference type="GO" id="GO:0004129">
    <property type="term" value="F:cytochrome-c oxidase activity"/>
    <property type="evidence" value="ECO:0007669"/>
    <property type="project" value="UniProtKB-EC"/>
</dbReference>
<dbReference type="GO" id="GO:0020037">
    <property type="term" value="F:heme binding"/>
    <property type="evidence" value="ECO:0007669"/>
    <property type="project" value="InterPro"/>
</dbReference>
<dbReference type="GO" id="GO:0046872">
    <property type="term" value="F:metal ion binding"/>
    <property type="evidence" value="ECO:0007669"/>
    <property type="project" value="UniProtKB-KW"/>
</dbReference>
<dbReference type="GO" id="GO:0015990">
    <property type="term" value="P:electron transport coupled proton transport"/>
    <property type="evidence" value="ECO:0007669"/>
    <property type="project" value="TreeGrafter"/>
</dbReference>
<dbReference type="GO" id="GO:0006123">
    <property type="term" value="P:mitochondrial electron transport, cytochrome c to oxygen"/>
    <property type="evidence" value="ECO:0007669"/>
    <property type="project" value="TreeGrafter"/>
</dbReference>
<dbReference type="CDD" id="cd01663">
    <property type="entry name" value="Cyt_c_Oxidase_I"/>
    <property type="match status" value="1"/>
</dbReference>
<dbReference type="FunFam" id="1.20.210.10:FF:000001">
    <property type="entry name" value="Cytochrome c oxidase subunit 1"/>
    <property type="match status" value="1"/>
</dbReference>
<dbReference type="Gene3D" id="1.20.210.10">
    <property type="entry name" value="Cytochrome c oxidase-like, subunit I domain"/>
    <property type="match status" value="1"/>
</dbReference>
<dbReference type="InterPro" id="IPR023616">
    <property type="entry name" value="Cyt_c_oxase-like_su1_dom"/>
</dbReference>
<dbReference type="InterPro" id="IPR036927">
    <property type="entry name" value="Cyt_c_oxase-like_su1_sf"/>
</dbReference>
<dbReference type="InterPro" id="IPR000883">
    <property type="entry name" value="Cyt_C_Oxase_1"/>
</dbReference>
<dbReference type="InterPro" id="IPR023615">
    <property type="entry name" value="Cyt_c_Oxase_su1_BS"/>
</dbReference>
<dbReference type="InterPro" id="IPR033944">
    <property type="entry name" value="Cyt_c_oxase_su1_dom"/>
</dbReference>
<dbReference type="PANTHER" id="PTHR10422">
    <property type="entry name" value="CYTOCHROME C OXIDASE SUBUNIT 1"/>
    <property type="match status" value="1"/>
</dbReference>
<dbReference type="PANTHER" id="PTHR10422:SF18">
    <property type="entry name" value="CYTOCHROME C OXIDASE SUBUNIT 1"/>
    <property type="match status" value="1"/>
</dbReference>
<dbReference type="Pfam" id="PF00115">
    <property type="entry name" value="COX1"/>
    <property type="match status" value="1"/>
</dbReference>
<dbReference type="PRINTS" id="PR01165">
    <property type="entry name" value="CYCOXIDASEI"/>
</dbReference>
<dbReference type="SUPFAM" id="SSF81442">
    <property type="entry name" value="Cytochrome c oxidase subunit I-like"/>
    <property type="match status" value="1"/>
</dbReference>
<dbReference type="PROSITE" id="PS50855">
    <property type="entry name" value="COX1"/>
    <property type="match status" value="1"/>
</dbReference>
<dbReference type="PROSITE" id="PS00077">
    <property type="entry name" value="COX1_CUB"/>
    <property type="match status" value="1"/>
</dbReference>
<accession>Q6EGI4</accession>
<proteinExistence type="inferred from homology"/>
<geneLocation type="mitochondrion"/>
<comment type="function">
    <text evidence="3">Component of the cytochrome c oxidase, the last enzyme in the mitochondrial electron transport chain which drives oxidative phosphorylation. The respiratory chain contains 3 multisubunit complexes succinate dehydrogenase (complex II, CII), ubiquinol-cytochrome c oxidoreductase (cytochrome b-c1 complex, complex III, CIII) and cytochrome c oxidase (complex IV, CIV), that cooperate to transfer electrons derived from NADH and succinate to molecular oxygen, creating an electrochemical gradient over the inner membrane that drives transmembrane transport and the ATP synthase. Cytochrome c oxidase is the component of the respiratory chain that catalyzes the reduction of oxygen to water. Electrons originating from reduced cytochrome c in the intermembrane space (IMS) are transferred via the dinuclear copper A center (CU(A)) of subunit 2 and heme A of subunit 1 to the active site in subunit 1, a binuclear center (BNC) formed by heme A3 and copper B (CU(B)). The BNC reduces molecular oxygen to 2 water molecules using 4 electrons from cytochrome c in the IMS and 4 protons from the mitochondrial matrix.</text>
</comment>
<comment type="catalytic activity">
    <reaction evidence="3">
        <text>4 Fe(II)-[cytochrome c] + O2 + 8 H(+)(in) = 4 Fe(III)-[cytochrome c] + 2 H2O + 4 H(+)(out)</text>
        <dbReference type="Rhea" id="RHEA:11436"/>
        <dbReference type="Rhea" id="RHEA-COMP:10350"/>
        <dbReference type="Rhea" id="RHEA-COMP:14399"/>
        <dbReference type="ChEBI" id="CHEBI:15377"/>
        <dbReference type="ChEBI" id="CHEBI:15378"/>
        <dbReference type="ChEBI" id="CHEBI:15379"/>
        <dbReference type="ChEBI" id="CHEBI:29033"/>
        <dbReference type="ChEBI" id="CHEBI:29034"/>
        <dbReference type="EC" id="7.1.1.9"/>
    </reaction>
    <physiologicalReaction direction="left-to-right" evidence="3">
        <dbReference type="Rhea" id="RHEA:11437"/>
    </physiologicalReaction>
</comment>
<comment type="cofactor">
    <cofactor evidence="2">
        <name>heme</name>
        <dbReference type="ChEBI" id="CHEBI:30413"/>
    </cofactor>
    <text evidence="2">Binds 2 heme A groups non-covalently per subunit.</text>
</comment>
<comment type="cofactor">
    <cofactor evidence="2">
        <name>Cu cation</name>
        <dbReference type="ChEBI" id="CHEBI:23378"/>
    </cofactor>
    <text evidence="2">Binds a copper B center.</text>
</comment>
<comment type="pathway">
    <text evidence="3">Energy metabolism; oxidative phosphorylation.</text>
</comment>
<comment type="subunit">
    <text evidence="1 2">Component of the cytochrome c oxidase (complex IV, CIV), a multisubunit enzyme composed of 14 subunits. The complex is composed of a catalytic core of 3 subunits MT-CO1, MT-CO2 and MT-CO3, encoded in the mitochondrial DNA, and 11 supernumerary subunits COX4I, COX5A, COX5B, COX6A, COX6B, COX6C, COX7A, COX7B, COX7C, COX8 and NDUFA4, which are encoded in the nuclear genome. The complex exists as a monomer or a dimer and forms supercomplexes (SCs) in the inner mitochondrial membrane with NADH-ubiquinone oxidoreductase (complex I, CI) and ubiquinol-cytochrome c oxidoreductase (cytochrome b-c1 complex, complex III, CIII), resulting in different assemblies (supercomplex SCI(1)III(2)IV(1) and megacomplex MCI(2)III(2)IV(2)) (By similarity). As a newly synthesized protein, rapidly incorporates into a multi-subunit assembly intermediate in the inner membrane, called MITRAC (mitochondrial translation regulation assembly intermediate of cytochrome c oxidase) complex, whose core components are COA3/MITRAC12 and COX14. Within the MITRAC complex, interacts with COA3 and with SMIM20/MITRAC7; the interaction with SMIM20 stabilizes the newly synthesized MT-CO1 and prevents its premature turnover. Interacts with TMEM177 in a COX20-dependent manner (By similarity).</text>
</comment>
<comment type="subcellular location">
    <subcellularLocation>
        <location evidence="2">Mitochondrion inner membrane</location>
        <topology evidence="2">Multi-pass membrane protein</topology>
    </subcellularLocation>
</comment>
<comment type="similarity">
    <text evidence="4">Belongs to the heme-copper respiratory oxidase family.</text>
</comment>
<name>COX1_HETUN</name>
<gene>
    <name type="primary">MT-CO1</name>
    <name type="synonym">COI</name>
    <name type="synonym">COXI</name>
    <name type="synonym">MTCO1</name>
</gene>
<keyword id="KW-0106">Calcium</keyword>
<keyword id="KW-0186">Copper</keyword>
<keyword id="KW-0249">Electron transport</keyword>
<keyword id="KW-0349">Heme</keyword>
<keyword id="KW-0408">Iron</keyword>
<keyword id="KW-0460">Magnesium</keyword>
<keyword id="KW-0472">Membrane</keyword>
<keyword id="KW-0479">Metal-binding</keyword>
<keyword id="KW-0496">Mitochondrion</keyword>
<keyword id="KW-0999">Mitochondrion inner membrane</keyword>
<keyword id="KW-0679">Respiratory chain</keyword>
<keyword id="KW-0915">Sodium</keyword>
<keyword id="KW-1278">Translocase</keyword>
<keyword id="KW-0812">Transmembrane</keyword>
<keyword id="KW-1133">Transmembrane helix</keyword>
<keyword id="KW-0813">Transport</keyword>
<organism>
    <name type="scientific">Heterogeomys underwoodi</name>
    <name type="common">Underwood's pocket gopher</name>
    <name type="synonym">Orthogeomys underwoodi</name>
    <dbReference type="NCBI Taxonomy" id="35666"/>
    <lineage>
        <taxon>Eukaryota</taxon>
        <taxon>Metazoa</taxon>
        <taxon>Chordata</taxon>
        <taxon>Craniata</taxon>
        <taxon>Vertebrata</taxon>
        <taxon>Euteleostomi</taxon>
        <taxon>Mammalia</taxon>
        <taxon>Eutheria</taxon>
        <taxon>Euarchontoglires</taxon>
        <taxon>Glires</taxon>
        <taxon>Rodentia</taxon>
        <taxon>Castorimorpha</taxon>
        <taxon>Geomyidae</taxon>
        <taxon>Heterogeomys</taxon>
    </lineage>
</organism>
<protein>
    <recommendedName>
        <fullName>Cytochrome c oxidase subunit 1</fullName>
        <ecNumber>7.1.1.9</ecNumber>
    </recommendedName>
    <alternativeName>
        <fullName>Cytochrome c oxidase polypeptide I</fullName>
    </alternativeName>
</protein>
<feature type="chain" id="PRO_0000183374" description="Cytochrome c oxidase subunit 1">
    <location>
        <begin position="1"/>
        <end position="515"/>
    </location>
</feature>
<feature type="topological domain" description="Mitochondrial matrix" evidence="2">
    <location>
        <begin position="1"/>
        <end position="11"/>
    </location>
</feature>
<feature type="transmembrane region" description="Helical; Name=I" evidence="2">
    <location>
        <begin position="12"/>
        <end position="40"/>
    </location>
</feature>
<feature type="topological domain" description="Mitochondrial intermembrane" evidence="2">
    <location>
        <begin position="41"/>
        <end position="50"/>
    </location>
</feature>
<feature type="transmembrane region" description="Helical; Name=II" evidence="2">
    <location>
        <begin position="51"/>
        <end position="86"/>
    </location>
</feature>
<feature type="topological domain" description="Mitochondrial matrix" evidence="2">
    <location>
        <begin position="87"/>
        <end position="94"/>
    </location>
</feature>
<feature type="transmembrane region" description="Helical; Name=III" evidence="2">
    <location>
        <begin position="95"/>
        <end position="117"/>
    </location>
</feature>
<feature type="topological domain" description="Mitochondrial intermembrane" evidence="2">
    <location>
        <begin position="118"/>
        <end position="140"/>
    </location>
</feature>
<feature type="transmembrane region" description="Helical; Name=IV" evidence="2">
    <location>
        <begin position="141"/>
        <end position="170"/>
    </location>
</feature>
<feature type="topological domain" description="Mitochondrial matrix" evidence="2">
    <location>
        <begin position="171"/>
        <end position="182"/>
    </location>
</feature>
<feature type="transmembrane region" description="Helical; Name=V" evidence="2">
    <location>
        <begin position="183"/>
        <end position="212"/>
    </location>
</feature>
<feature type="topological domain" description="Mitochondrial intermembrane" evidence="2">
    <location>
        <begin position="213"/>
        <end position="227"/>
    </location>
</feature>
<feature type="transmembrane region" description="Helical; Name=VI" evidence="2">
    <location>
        <begin position="228"/>
        <end position="261"/>
    </location>
</feature>
<feature type="topological domain" description="Mitochondrial matrix" evidence="2">
    <location>
        <begin position="262"/>
        <end position="269"/>
    </location>
</feature>
<feature type="transmembrane region" description="Helical; Name=VII" evidence="2">
    <location>
        <begin position="270"/>
        <end position="286"/>
    </location>
</feature>
<feature type="topological domain" description="Mitochondrial intermembrane" evidence="2">
    <location>
        <begin position="287"/>
        <end position="298"/>
    </location>
</feature>
<feature type="transmembrane region" description="Helical; Name=VIII" evidence="2">
    <location>
        <begin position="299"/>
        <end position="327"/>
    </location>
</feature>
<feature type="topological domain" description="Mitochondrial matrix" evidence="2">
    <location>
        <begin position="328"/>
        <end position="335"/>
    </location>
</feature>
<feature type="transmembrane region" description="Helical; Name=IX" evidence="2">
    <location>
        <begin position="336"/>
        <end position="357"/>
    </location>
</feature>
<feature type="topological domain" description="Mitochondrial intermembrane" evidence="2">
    <location>
        <begin position="358"/>
        <end position="370"/>
    </location>
</feature>
<feature type="transmembrane region" description="Helical; Name=X" evidence="2">
    <location>
        <begin position="371"/>
        <end position="400"/>
    </location>
</feature>
<feature type="topological domain" description="Mitochondrial matrix" evidence="2">
    <location>
        <begin position="401"/>
        <end position="406"/>
    </location>
</feature>
<feature type="transmembrane region" description="Helical; Name=XI" evidence="2">
    <location>
        <begin position="407"/>
        <end position="433"/>
    </location>
</feature>
<feature type="topological domain" description="Mitochondrial intermembrane" evidence="2">
    <location>
        <begin position="434"/>
        <end position="446"/>
    </location>
</feature>
<feature type="transmembrane region" description="Helical; Name=XII" evidence="2">
    <location>
        <begin position="447"/>
        <end position="478"/>
    </location>
</feature>
<feature type="topological domain" description="Mitochondrial matrix" evidence="2">
    <location>
        <begin position="479"/>
        <end position="515"/>
    </location>
</feature>
<feature type="binding site" evidence="2">
    <location>
        <position position="40"/>
    </location>
    <ligand>
        <name>Na(+)</name>
        <dbReference type="ChEBI" id="CHEBI:29101"/>
    </ligand>
</feature>
<feature type="binding site" evidence="2">
    <location>
        <position position="45"/>
    </location>
    <ligand>
        <name>Na(+)</name>
        <dbReference type="ChEBI" id="CHEBI:29101"/>
    </ligand>
</feature>
<feature type="binding site" description="axial binding residue" evidence="2">
    <location>
        <position position="61"/>
    </location>
    <ligand>
        <name>Fe(II)-heme a</name>
        <dbReference type="ChEBI" id="CHEBI:61715"/>
        <note>low-spin</note>
    </ligand>
    <ligandPart>
        <name>Fe</name>
        <dbReference type="ChEBI" id="CHEBI:18248"/>
    </ligandPart>
</feature>
<feature type="binding site" evidence="2">
    <location>
        <position position="240"/>
    </location>
    <ligand>
        <name>Cu cation</name>
        <dbReference type="ChEBI" id="CHEBI:23378"/>
        <label>B</label>
    </ligand>
</feature>
<feature type="binding site" evidence="2">
    <location>
        <position position="244"/>
    </location>
    <ligand>
        <name>O2</name>
        <dbReference type="ChEBI" id="CHEBI:15379"/>
    </ligand>
</feature>
<feature type="binding site" evidence="2">
    <location>
        <position position="290"/>
    </location>
    <ligand>
        <name>Cu cation</name>
        <dbReference type="ChEBI" id="CHEBI:23378"/>
        <label>B</label>
    </ligand>
</feature>
<feature type="binding site" evidence="2">
    <location>
        <position position="291"/>
    </location>
    <ligand>
        <name>Cu cation</name>
        <dbReference type="ChEBI" id="CHEBI:23378"/>
        <label>B</label>
    </ligand>
</feature>
<feature type="binding site" evidence="2">
    <location>
        <position position="368"/>
    </location>
    <ligand>
        <name>Mg(2+)</name>
        <dbReference type="ChEBI" id="CHEBI:18420"/>
        <note>ligand shared with MT-CO2</note>
    </ligand>
</feature>
<feature type="binding site" evidence="2">
    <location>
        <position position="369"/>
    </location>
    <ligand>
        <name>Mg(2+)</name>
        <dbReference type="ChEBI" id="CHEBI:18420"/>
        <note>ligand shared with MT-CO2</note>
    </ligand>
</feature>
<feature type="binding site" description="axial binding residue" evidence="2">
    <location>
        <position position="376"/>
    </location>
    <ligand>
        <name>heme a3</name>
        <dbReference type="ChEBI" id="CHEBI:83282"/>
        <note>high-spin</note>
    </ligand>
    <ligandPart>
        <name>Fe</name>
        <dbReference type="ChEBI" id="CHEBI:18248"/>
    </ligandPart>
</feature>
<feature type="binding site" description="axial binding residue" evidence="2">
    <location>
        <position position="378"/>
    </location>
    <ligand>
        <name>Fe(II)-heme a</name>
        <dbReference type="ChEBI" id="CHEBI:61715"/>
        <note>low-spin</note>
    </ligand>
    <ligandPart>
        <name>Fe</name>
        <dbReference type="ChEBI" id="CHEBI:18248"/>
    </ligandPart>
</feature>
<feature type="binding site" evidence="2">
    <location>
        <position position="441"/>
    </location>
    <ligand>
        <name>Na(+)</name>
        <dbReference type="ChEBI" id="CHEBI:29101"/>
    </ligand>
</feature>
<feature type="cross-link" description="1'-histidyl-3'-tyrosine (His-Tyr)" evidence="2">
    <location>
        <begin position="240"/>
        <end position="244"/>
    </location>
</feature>
<sequence length="515" mass="57029">MFINRWLFSTNHKDIGTLYMIFGAWAGMVGTGLSILIRAELGQPGSLLGDDQIYNVVVTAHAFVMIFFMVMPIMIGGFGNWLVPLMIGAPDMAFPRMNNMSFWLLPPSFLLLLASSMVEAGAGTGWTVYPPLAGNLAHAGASVDLTIFSLHLAGVSSILGAINFITTIINMKPPAITQYQTPLFVWSVMITAVLLLLSLPVLAAGITMLLTDRNLNTTFFDPAGGGDPILYQHLFWFFGHPEVYILILPGFGMISHIVTYYSGKKEPFGYMGMVWAMMSIGFLGFIVWAHHMFTVGMDVDTRAYFTSATMIIAIPTGVKVFSWLATMNGGNIKWSPAMLWALGFIFLFTIGGLTGIVLSNSSLDIVLHDTYYVVAHFHYVLSMGAVFAIMGGFVHWFPLFTGYTLNDTWAKIHFTIMFVGVNLTFFPQHFLGLAGMPRRYSDYPDAYTTWNTISSMGSFISLTAVILMVFMIWEAFASKRTVKSIPLTSTNLEWIHGCPPPFHTFEEPAFIKSPH</sequence>
<evidence type="ECO:0000250" key="1">
    <source>
        <dbReference type="UniProtKB" id="P00395"/>
    </source>
</evidence>
<evidence type="ECO:0000250" key="2">
    <source>
        <dbReference type="UniProtKB" id="P00396"/>
    </source>
</evidence>
<evidence type="ECO:0000250" key="3">
    <source>
        <dbReference type="UniProtKB" id="P00401"/>
    </source>
</evidence>
<evidence type="ECO:0000305" key="4"/>
<reference key="1">
    <citation type="journal article" date="2004" name="J. Mammal. Evol.">
        <title>DNA data support a rapid radiation of pocket gopher genera.</title>
        <authorList>
            <person name="Spradling T.A."/>
            <person name="Brant S.V."/>
            <person name="Hafner M.S."/>
            <person name="Dickerson C.J."/>
        </authorList>
    </citation>
    <scope>NUCLEOTIDE SEQUENCE [GENOMIC DNA]</scope>
</reference>